<gene>
    <name evidence="2" type="primary">sip-1</name>
    <name type="ORF">F43D9.4</name>
</gene>
<reference evidence="2" key="1">
    <citation type="journal article" date="1998" name="Science">
        <title>Genome sequence of the nematode C. elegans: a platform for investigating biology.</title>
        <authorList>
            <consortium name="The C. elegans sequencing consortium"/>
        </authorList>
    </citation>
    <scope>NUCLEOTIDE SEQUENCE [LARGE SCALE GENOMIC DNA]</scope>
    <source>
        <strain>Bristol N2</strain>
    </source>
</reference>
<reference key="2">
    <citation type="submission" date="2006-03" db="UniProtKB">
        <authorList>
            <person name="Bienvenut W.V."/>
        </authorList>
    </citation>
    <scope>PROTEIN SEQUENCE OF 17-52; 57-68; 86-92 AND 98-134</scope>
    <scope>IDENTIFICATION BY MASS SPECTROMETRY</scope>
</reference>
<organism>
    <name type="scientific">Caenorhabditis elegans</name>
    <dbReference type="NCBI Taxonomy" id="6239"/>
    <lineage>
        <taxon>Eukaryota</taxon>
        <taxon>Metazoa</taxon>
        <taxon>Ecdysozoa</taxon>
        <taxon>Nematoda</taxon>
        <taxon>Chromadorea</taxon>
        <taxon>Rhabditida</taxon>
        <taxon>Rhabditina</taxon>
        <taxon>Rhabditomorpha</taxon>
        <taxon>Rhabditoidea</taxon>
        <taxon>Rhabditidae</taxon>
        <taxon>Peloderinae</taxon>
        <taxon>Caenorhabditis</taxon>
    </lineage>
</organism>
<protein>
    <recommendedName>
        <fullName>Stress-induced protein 1</fullName>
    </recommendedName>
</protein>
<feature type="chain" id="PRO_0000239933" description="Stress-induced protein 1">
    <location>
        <begin position="1"/>
        <end position="159"/>
    </location>
</feature>
<feature type="domain" description="sHSP" evidence="1">
    <location>
        <begin position="33"/>
        <end position="141"/>
    </location>
</feature>
<feature type="strand" evidence="3">
    <location>
        <begin position="46"/>
        <end position="48"/>
    </location>
</feature>
<feature type="strand" evidence="3">
    <location>
        <begin position="50"/>
        <end position="58"/>
    </location>
</feature>
<feature type="helix" evidence="3">
    <location>
        <begin position="64"/>
        <end position="66"/>
    </location>
</feature>
<feature type="strand" evidence="3">
    <location>
        <begin position="67"/>
        <end position="72"/>
    </location>
</feature>
<feature type="strand" evidence="3">
    <location>
        <begin position="75"/>
        <end position="85"/>
    </location>
</feature>
<feature type="strand" evidence="3">
    <location>
        <begin position="87"/>
        <end position="100"/>
    </location>
</feature>
<feature type="helix" evidence="3">
    <location>
        <begin position="107"/>
        <end position="109"/>
    </location>
</feature>
<feature type="strand" evidence="3">
    <location>
        <begin position="111"/>
        <end position="114"/>
    </location>
</feature>
<feature type="strand" evidence="3">
    <location>
        <begin position="118"/>
        <end position="126"/>
    </location>
</feature>
<comment type="similarity">
    <text evidence="1">Belongs to the small heat shock protein (HSP20) family.</text>
</comment>
<sequence length="159" mass="17839">MSSLCPYTGRPTGLFRDFEDMMPYWAQRHSMLNNFNNIVPQQLNEVENTAQKFCVKLDVAAFKPEELKVNLEGHVLTIEGHHEVKTEHGFSKRSFTRQFTLPKDVDLAHIHTVINKEGQMTIDAPKTGSNTTVRALPIHTSAGHAVTQKPSSTTTTGKH</sequence>
<proteinExistence type="evidence at protein level"/>
<dbReference type="EMBL" id="Z35640">
    <property type="protein sequence ID" value="CAA84703.1"/>
    <property type="molecule type" value="Genomic_DNA"/>
</dbReference>
<dbReference type="PIR" id="T22126">
    <property type="entry name" value="T22126"/>
</dbReference>
<dbReference type="RefSeq" id="NP_499316.1">
    <property type="nucleotide sequence ID" value="NM_066915.5"/>
</dbReference>
<dbReference type="PDB" id="4YDZ">
    <property type="method" value="X-ray"/>
    <property type="resolution" value="3.60 A"/>
    <property type="chains" value="A/B/C/D=1-159"/>
</dbReference>
<dbReference type="PDB" id="4YE0">
    <property type="method" value="X-ray"/>
    <property type="resolution" value="2.10 A"/>
    <property type="chains" value="A/B=43-159"/>
</dbReference>
<dbReference type="PDBsum" id="4YDZ"/>
<dbReference type="PDBsum" id="4YE0"/>
<dbReference type="SMR" id="Q20363"/>
<dbReference type="BioGRID" id="41662">
    <property type="interactions" value="18"/>
</dbReference>
<dbReference type="FunCoup" id="Q20363">
    <property type="interactions" value="60"/>
</dbReference>
<dbReference type="IntAct" id="Q20363">
    <property type="interactions" value="3"/>
</dbReference>
<dbReference type="MINT" id="Q20363"/>
<dbReference type="STRING" id="6239.F43D9.4.1"/>
<dbReference type="PaxDb" id="6239-F43D9.4"/>
<dbReference type="PeptideAtlas" id="Q20363"/>
<dbReference type="EnsemblMetazoa" id="F43D9.4.1">
    <property type="protein sequence ID" value="F43D9.4.1"/>
    <property type="gene ID" value="WBGene00004798"/>
</dbReference>
<dbReference type="GeneID" id="176471"/>
<dbReference type="KEGG" id="cel:CELE_F43D9.4"/>
<dbReference type="UCSC" id="F43D9.4.1">
    <property type="organism name" value="c. elegans"/>
</dbReference>
<dbReference type="AGR" id="WB:WBGene00004798"/>
<dbReference type="CTD" id="176471"/>
<dbReference type="WormBase" id="F43D9.4">
    <property type="protein sequence ID" value="CE00994"/>
    <property type="gene ID" value="WBGene00004798"/>
    <property type="gene designation" value="sip-1"/>
</dbReference>
<dbReference type="eggNOG" id="KOG3591">
    <property type="taxonomic scope" value="Eukaryota"/>
</dbReference>
<dbReference type="HOGENOM" id="CLU_095001_4_1_1"/>
<dbReference type="InParanoid" id="Q20363"/>
<dbReference type="OMA" id="DLAHIHT"/>
<dbReference type="OrthoDB" id="1431247at2759"/>
<dbReference type="PhylomeDB" id="Q20363"/>
<dbReference type="Reactome" id="R-CEL-4420097">
    <property type="pathway name" value="VEGFA-VEGFR2 Pathway"/>
</dbReference>
<dbReference type="SignaLink" id="Q20363"/>
<dbReference type="EvolutionaryTrace" id="Q20363"/>
<dbReference type="PRO" id="PR:Q20363"/>
<dbReference type="Proteomes" id="UP000001940">
    <property type="component" value="Chromosome III"/>
</dbReference>
<dbReference type="Bgee" id="WBGene00004798">
    <property type="expression patterns" value="Expressed in germ line (C elegans) and 5 other cell types or tissues"/>
</dbReference>
<dbReference type="GO" id="GO:0005737">
    <property type="term" value="C:cytoplasm"/>
    <property type="evidence" value="ECO:0000318"/>
    <property type="project" value="GO_Central"/>
</dbReference>
<dbReference type="GO" id="GO:0005829">
    <property type="term" value="C:cytosol"/>
    <property type="evidence" value="ECO:0000314"/>
    <property type="project" value="WormBase"/>
</dbReference>
<dbReference type="GO" id="GO:0005634">
    <property type="term" value="C:nucleus"/>
    <property type="evidence" value="ECO:0000318"/>
    <property type="project" value="GO_Central"/>
</dbReference>
<dbReference type="GO" id="GO:0051082">
    <property type="term" value="F:unfolded protein binding"/>
    <property type="evidence" value="ECO:0000318"/>
    <property type="project" value="GO_Central"/>
</dbReference>
<dbReference type="GO" id="GO:0008340">
    <property type="term" value="P:determination of adult lifespan"/>
    <property type="evidence" value="ECO:0000316"/>
    <property type="project" value="WormBase"/>
</dbReference>
<dbReference type="GO" id="GO:0009792">
    <property type="term" value="P:embryo development ending in birth or egg hatching"/>
    <property type="evidence" value="ECO:0000315"/>
    <property type="project" value="WormBase"/>
</dbReference>
<dbReference type="GO" id="GO:0019538">
    <property type="term" value="P:protein metabolic process"/>
    <property type="evidence" value="ECO:0000270"/>
    <property type="project" value="WormBase"/>
</dbReference>
<dbReference type="GO" id="GO:0042026">
    <property type="term" value="P:protein refolding"/>
    <property type="evidence" value="ECO:0000318"/>
    <property type="project" value="GO_Central"/>
</dbReference>
<dbReference type="GO" id="GO:0009408">
    <property type="term" value="P:response to heat"/>
    <property type="evidence" value="ECO:0000315"/>
    <property type="project" value="WormBase"/>
</dbReference>
<dbReference type="CDD" id="cd06526">
    <property type="entry name" value="metazoan_ACD"/>
    <property type="match status" value="1"/>
</dbReference>
<dbReference type="FunFam" id="2.60.40.790:FF:000094">
    <property type="entry name" value="Heat shock protein Hsp-16.2"/>
    <property type="match status" value="1"/>
</dbReference>
<dbReference type="Gene3D" id="2.60.40.790">
    <property type="match status" value="1"/>
</dbReference>
<dbReference type="InterPro" id="IPR002068">
    <property type="entry name" value="A-crystallin/Hsp20_dom"/>
</dbReference>
<dbReference type="InterPro" id="IPR001436">
    <property type="entry name" value="Alpha-crystallin/sHSP_animal"/>
</dbReference>
<dbReference type="InterPro" id="IPR008978">
    <property type="entry name" value="HSP20-like_chaperone"/>
</dbReference>
<dbReference type="PANTHER" id="PTHR45640">
    <property type="entry name" value="HEAT SHOCK PROTEIN HSP-12.2-RELATED"/>
    <property type="match status" value="1"/>
</dbReference>
<dbReference type="PANTHER" id="PTHR45640:SF32">
    <property type="entry name" value="STRESS-INDUCED PROTEIN 1"/>
    <property type="match status" value="1"/>
</dbReference>
<dbReference type="Pfam" id="PF00011">
    <property type="entry name" value="HSP20"/>
    <property type="match status" value="1"/>
</dbReference>
<dbReference type="PRINTS" id="PR00299">
    <property type="entry name" value="ACRYSTALLIN"/>
</dbReference>
<dbReference type="SUPFAM" id="SSF49764">
    <property type="entry name" value="HSP20-like chaperones"/>
    <property type="match status" value="1"/>
</dbReference>
<dbReference type="PROSITE" id="PS01031">
    <property type="entry name" value="SHSP"/>
    <property type="match status" value="1"/>
</dbReference>
<accession>Q20363</accession>
<keyword id="KW-0002">3D-structure</keyword>
<keyword id="KW-0903">Direct protein sequencing</keyword>
<keyword id="KW-1185">Reference proteome</keyword>
<name>SIP1_CAEEL</name>
<evidence type="ECO:0000255" key="1">
    <source>
        <dbReference type="PROSITE-ProRule" id="PRU00285"/>
    </source>
</evidence>
<evidence type="ECO:0000312" key="2">
    <source>
        <dbReference type="EMBL" id="CAA84703.1"/>
    </source>
</evidence>
<evidence type="ECO:0007829" key="3">
    <source>
        <dbReference type="PDB" id="4YE0"/>
    </source>
</evidence>